<keyword id="KW-0032">Aminotransferase</keyword>
<keyword id="KW-0808">Transferase</keyword>
<organism>
    <name type="scientific">Legionella pneumophila (strain Lens)</name>
    <dbReference type="NCBI Taxonomy" id="297245"/>
    <lineage>
        <taxon>Bacteria</taxon>
        <taxon>Pseudomonadati</taxon>
        <taxon>Pseudomonadota</taxon>
        <taxon>Gammaproteobacteria</taxon>
        <taxon>Legionellales</taxon>
        <taxon>Legionellaceae</taxon>
        <taxon>Legionella</taxon>
    </lineage>
</organism>
<dbReference type="EC" id="2.1.2.10" evidence="1"/>
<dbReference type="EMBL" id="CR628337">
    <property type="protein sequence ID" value="CAH14347.1"/>
    <property type="molecule type" value="Genomic_DNA"/>
</dbReference>
<dbReference type="RefSeq" id="WP_011214400.1">
    <property type="nucleotide sequence ID" value="NC_006369.1"/>
</dbReference>
<dbReference type="SMR" id="Q5X0A4"/>
<dbReference type="KEGG" id="lpf:lpl0117"/>
<dbReference type="LegioList" id="lpl0117"/>
<dbReference type="HOGENOM" id="CLU_007884_10_2_6"/>
<dbReference type="Proteomes" id="UP000002517">
    <property type="component" value="Chromosome"/>
</dbReference>
<dbReference type="GO" id="GO:0005829">
    <property type="term" value="C:cytosol"/>
    <property type="evidence" value="ECO:0007669"/>
    <property type="project" value="TreeGrafter"/>
</dbReference>
<dbReference type="GO" id="GO:0005960">
    <property type="term" value="C:glycine cleavage complex"/>
    <property type="evidence" value="ECO:0007669"/>
    <property type="project" value="InterPro"/>
</dbReference>
<dbReference type="GO" id="GO:0004047">
    <property type="term" value="F:aminomethyltransferase activity"/>
    <property type="evidence" value="ECO:0007669"/>
    <property type="project" value="UniProtKB-UniRule"/>
</dbReference>
<dbReference type="GO" id="GO:0008483">
    <property type="term" value="F:transaminase activity"/>
    <property type="evidence" value="ECO:0007669"/>
    <property type="project" value="UniProtKB-KW"/>
</dbReference>
<dbReference type="GO" id="GO:0019464">
    <property type="term" value="P:glycine decarboxylation via glycine cleavage system"/>
    <property type="evidence" value="ECO:0007669"/>
    <property type="project" value="UniProtKB-UniRule"/>
</dbReference>
<dbReference type="FunFam" id="3.30.70.1400:FF:000001">
    <property type="entry name" value="Aminomethyltransferase"/>
    <property type="match status" value="1"/>
</dbReference>
<dbReference type="FunFam" id="4.10.1250.10:FF:000001">
    <property type="entry name" value="Aminomethyltransferase"/>
    <property type="match status" value="1"/>
</dbReference>
<dbReference type="Gene3D" id="2.40.30.110">
    <property type="entry name" value="Aminomethyltransferase beta-barrel domains"/>
    <property type="match status" value="1"/>
</dbReference>
<dbReference type="Gene3D" id="3.30.70.1400">
    <property type="entry name" value="Aminomethyltransferase beta-barrel domains"/>
    <property type="match status" value="1"/>
</dbReference>
<dbReference type="Gene3D" id="4.10.1250.10">
    <property type="entry name" value="Aminomethyltransferase fragment"/>
    <property type="match status" value="1"/>
</dbReference>
<dbReference type="Gene3D" id="3.30.1360.120">
    <property type="entry name" value="Probable tRNA modification gtpase trme, domain 1"/>
    <property type="match status" value="1"/>
</dbReference>
<dbReference type="HAMAP" id="MF_00259">
    <property type="entry name" value="GcvT"/>
    <property type="match status" value="1"/>
</dbReference>
<dbReference type="InterPro" id="IPR006223">
    <property type="entry name" value="GCS_T"/>
</dbReference>
<dbReference type="InterPro" id="IPR022903">
    <property type="entry name" value="GCS_T_bac"/>
</dbReference>
<dbReference type="InterPro" id="IPR013977">
    <property type="entry name" value="GCST_C"/>
</dbReference>
<dbReference type="InterPro" id="IPR006222">
    <property type="entry name" value="GCV_T_N"/>
</dbReference>
<dbReference type="InterPro" id="IPR028896">
    <property type="entry name" value="GcvT/YgfZ/DmdA"/>
</dbReference>
<dbReference type="InterPro" id="IPR029043">
    <property type="entry name" value="GcvT/YgfZ_C"/>
</dbReference>
<dbReference type="InterPro" id="IPR027266">
    <property type="entry name" value="TrmE/GcvT_dom1"/>
</dbReference>
<dbReference type="NCBIfam" id="TIGR00528">
    <property type="entry name" value="gcvT"/>
    <property type="match status" value="1"/>
</dbReference>
<dbReference type="NCBIfam" id="NF001567">
    <property type="entry name" value="PRK00389.1"/>
    <property type="match status" value="1"/>
</dbReference>
<dbReference type="PANTHER" id="PTHR43757">
    <property type="entry name" value="AMINOMETHYLTRANSFERASE"/>
    <property type="match status" value="1"/>
</dbReference>
<dbReference type="PANTHER" id="PTHR43757:SF2">
    <property type="entry name" value="AMINOMETHYLTRANSFERASE, MITOCHONDRIAL"/>
    <property type="match status" value="1"/>
</dbReference>
<dbReference type="Pfam" id="PF01571">
    <property type="entry name" value="GCV_T"/>
    <property type="match status" value="1"/>
</dbReference>
<dbReference type="Pfam" id="PF08669">
    <property type="entry name" value="GCV_T_C"/>
    <property type="match status" value="1"/>
</dbReference>
<dbReference type="PIRSF" id="PIRSF006487">
    <property type="entry name" value="GcvT"/>
    <property type="match status" value="1"/>
</dbReference>
<dbReference type="SUPFAM" id="SSF101790">
    <property type="entry name" value="Aminomethyltransferase beta-barrel domain"/>
    <property type="match status" value="1"/>
</dbReference>
<dbReference type="SUPFAM" id="SSF103025">
    <property type="entry name" value="Folate-binding domain"/>
    <property type="match status" value="1"/>
</dbReference>
<comment type="function">
    <text evidence="1">The glycine cleavage system catalyzes the degradation of glycine.</text>
</comment>
<comment type="catalytic activity">
    <reaction evidence="1">
        <text>N(6)-[(R)-S(8)-aminomethyldihydrolipoyl]-L-lysyl-[protein] + (6S)-5,6,7,8-tetrahydrofolate = N(6)-[(R)-dihydrolipoyl]-L-lysyl-[protein] + (6R)-5,10-methylene-5,6,7,8-tetrahydrofolate + NH4(+)</text>
        <dbReference type="Rhea" id="RHEA:16945"/>
        <dbReference type="Rhea" id="RHEA-COMP:10475"/>
        <dbReference type="Rhea" id="RHEA-COMP:10492"/>
        <dbReference type="ChEBI" id="CHEBI:15636"/>
        <dbReference type="ChEBI" id="CHEBI:28938"/>
        <dbReference type="ChEBI" id="CHEBI:57453"/>
        <dbReference type="ChEBI" id="CHEBI:83100"/>
        <dbReference type="ChEBI" id="CHEBI:83143"/>
        <dbReference type="EC" id="2.1.2.10"/>
    </reaction>
</comment>
<comment type="subunit">
    <text evidence="1">The glycine cleavage system is composed of four proteins: P, T, L and H.</text>
</comment>
<comment type="similarity">
    <text evidence="1">Belongs to the GcvT family.</text>
</comment>
<name>GCST_LEGPL</name>
<accession>Q5X0A4</accession>
<proteinExistence type="inferred from homology"/>
<evidence type="ECO:0000255" key="1">
    <source>
        <dbReference type="HAMAP-Rule" id="MF_00259"/>
    </source>
</evidence>
<protein>
    <recommendedName>
        <fullName evidence="1">Aminomethyltransferase</fullName>
        <ecNumber evidence="1">2.1.2.10</ecNumber>
    </recommendedName>
    <alternativeName>
        <fullName evidence="1">Glycine cleavage system T protein</fullName>
    </alternativeName>
</protein>
<reference key="1">
    <citation type="journal article" date="2004" name="Nat. Genet.">
        <title>Evidence in the Legionella pneumophila genome for exploitation of host cell functions and high genome plasticity.</title>
        <authorList>
            <person name="Cazalet C."/>
            <person name="Rusniok C."/>
            <person name="Brueggemann H."/>
            <person name="Zidane N."/>
            <person name="Magnier A."/>
            <person name="Ma L."/>
            <person name="Tichit M."/>
            <person name="Jarraud S."/>
            <person name="Bouchier C."/>
            <person name="Vandenesch F."/>
            <person name="Kunst F."/>
            <person name="Etienne J."/>
            <person name="Glaser P."/>
            <person name="Buchrieser C."/>
        </authorList>
    </citation>
    <scope>NUCLEOTIDE SEQUENCE [LARGE SCALE GENOMIC DNA]</scope>
    <source>
        <strain>Lens</strain>
    </source>
</reference>
<feature type="chain" id="PRO_0000122564" description="Aminomethyltransferase">
    <location>
        <begin position="1"/>
        <end position="360"/>
    </location>
</feature>
<gene>
    <name evidence="1" type="primary">gcvT</name>
    <name type="ordered locus">lpl0117</name>
</gene>
<sequence>MTAKTPLHTTHLACGAKMVDFHGWDMPLHYGSQLNEHHAVRNDAGMFDVSHMTIVDILGAGGRQFLRKLLTNDVDQITHNGKALYSCMCNEHGGIIDDLIVYQRASDNYRVVLNSATRQNDVAWIRAKSEGFAVGLQERRELSMLAVQGPNAIAKTLSILAPAHVDAVSTLTPFECVDVDHWFFARTGYTGEDGLEIIVPNEFVTQLWNDLLNAGVTPCGLGARDTLRLEAGMLLYGQDMDETTTPLESGLTWTVKWEPEDRGFIGMGALVSQKQQGIKRKMVGLTLLDKGIMRHGQKVIIEGCPDGIITSGSYSPTLQQSIALARVPVETGEQVLVDIRGKLIPAKVGKPRFIKQGKPV</sequence>